<organism>
    <name type="scientific">Saccharomyces cerevisiae (strain ATCC 204508 / S288c)</name>
    <name type="common">Baker's yeast</name>
    <dbReference type="NCBI Taxonomy" id="559292"/>
    <lineage>
        <taxon>Eukaryota</taxon>
        <taxon>Fungi</taxon>
        <taxon>Dikarya</taxon>
        <taxon>Ascomycota</taxon>
        <taxon>Saccharomycotina</taxon>
        <taxon>Saccharomycetes</taxon>
        <taxon>Saccharomycetales</taxon>
        <taxon>Saccharomycetaceae</taxon>
        <taxon>Saccharomyces</taxon>
    </lineage>
</organism>
<gene>
    <name evidence="11" type="primary">GLG2</name>
    <name type="ordered locus">YJL137C</name>
    <name type="ORF">J0663</name>
</gene>
<accession>P47011</accession>
<accession>D6VW47</accession>
<dbReference type="EC" id="2.4.1.186" evidence="13"/>
<dbReference type="EMBL" id="U25436">
    <property type="protein sequence ID" value="AAA91644.1"/>
    <property type="molecule type" value="Genomic_DNA"/>
</dbReference>
<dbReference type="EMBL" id="X87371">
    <property type="protein sequence ID" value="CAA60818.1"/>
    <property type="molecule type" value="Genomic_DNA"/>
</dbReference>
<dbReference type="EMBL" id="Z49412">
    <property type="protein sequence ID" value="CAA89432.1"/>
    <property type="molecule type" value="Genomic_DNA"/>
</dbReference>
<dbReference type="EMBL" id="BK006943">
    <property type="protein sequence ID" value="DAA08663.1"/>
    <property type="molecule type" value="Genomic_DNA"/>
</dbReference>
<dbReference type="PIR" id="S55176">
    <property type="entry name" value="S55176"/>
</dbReference>
<dbReference type="RefSeq" id="NP_012398.1">
    <property type="nucleotide sequence ID" value="NM_001181570.1"/>
</dbReference>
<dbReference type="SMR" id="P47011"/>
<dbReference type="BioGRID" id="33620">
    <property type="interactions" value="55"/>
</dbReference>
<dbReference type="DIP" id="DIP-1345N"/>
<dbReference type="FunCoup" id="P47011">
    <property type="interactions" value="131"/>
</dbReference>
<dbReference type="IntAct" id="P47011">
    <property type="interactions" value="4"/>
</dbReference>
<dbReference type="MINT" id="P47011"/>
<dbReference type="STRING" id="4932.YJL137C"/>
<dbReference type="CAZy" id="GT8">
    <property type="family name" value="Glycosyltransferase Family 8"/>
</dbReference>
<dbReference type="GlyCosmos" id="P47011">
    <property type="glycosylation" value="3 sites, No reported glycans"/>
</dbReference>
<dbReference type="GlyGen" id="P47011">
    <property type="glycosylation" value="3 sites"/>
</dbReference>
<dbReference type="PaxDb" id="4932-YJL137C"/>
<dbReference type="PeptideAtlas" id="P47011"/>
<dbReference type="EnsemblFungi" id="YJL137C_mRNA">
    <property type="protein sequence ID" value="YJL137C"/>
    <property type="gene ID" value="YJL137C"/>
</dbReference>
<dbReference type="GeneID" id="853304"/>
<dbReference type="KEGG" id="sce:YJL137C"/>
<dbReference type="AGR" id="SGD:S000003673"/>
<dbReference type="SGD" id="S000003673">
    <property type="gene designation" value="GLG2"/>
</dbReference>
<dbReference type="VEuPathDB" id="FungiDB:YJL137C"/>
<dbReference type="eggNOG" id="KOG1950">
    <property type="taxonomic scope" value="Eukaryota"/>
</dbReference>
<dbReference type="GeneTree" id="ENSGT00940000175485"/>
<dbReference type="HOGENOM" id="CLU_017171_4_1_1"/>
<dbReference type="InParanoid" id="P47011"/>
<dbReference type="OMA" id="NFRTAPS"/>
<dbReference type="OrthoDB" id="2014201at2759"/>
<dbReference type="BioCyc" id="YEAST:MONOMER3O-4031"/>
<dbReference type="Reactome" id="R-SCE-3322077">
    <property type="pathway name" value="Glycogen synthesis"/>
</dbReference>
<dbReference type="Reactome" id="R-SCE-6798695">
    <property type="pathway name" value="Neutrophil degranulation"/>
</dbReference>
<dbReference type="Reactome" id="R-SCE-70221">
    <property type="pathway name" value="Glycogen breakdown (glycogenolysis)"/>
</dbReference>
<dbReference type="BioGRID-ORCS" id="853304">
    <property type="hits" value="0 hits in 10 CRISPR screens"/>
</dbReference>
<dbReference type="PRO" id="PR:P47011"/>
<dbReference type="Proteomes" id="UP000002311">
    <property type="component" value="Chromosome X"/>
</dbReference>
<dbReference type="RNAct" id="P47011">
    <property type="molecule type" value="protein"/>
</dbReference>
<dbReference type="GO" id="GO:0005737">
    <property type="term" value="C:cytoplasm"/>
    <property type="evidence" value="ECO:0007005"/>
    <property type="project" value="SGD"/>
</dbReference>
<dbReference type="GO" id="GO:0005773">
    <property type="term" value="C:vacuole"/>
    <property type="evidence" value="ECO:0000250"/>
    <property type="project" value="UniProtKB"/>
</dbReference>
<dbReference type="GO" id="GO:0008466">
    <property type="term" value="F:glycogenin glucosyltransferase activity"/>
    <property type="evidence" value="ECO:0000316"/>
    <property type="project" value="SGD"/>
</dbReference>
<dbReference type="GO" id="GO:0016757">
    <property type="term" value="F:glycosyltransferase activity"/>
    <property type="evidence" value="ECO:0000318"/>
    <property type="project" value="GO_Central"/>
</dbReference>
<dbReference type="GO" id="GO:0046872">
    <property type="term" value="F:metal ion binding"/>
    <property type="evidence" value="ECO:0007669"/>
    <property type="project" value="UniProtKB-KW"/>
</dbReference>
<dbReference type="GO" id="GO:0005978">
    <property type="term" value="P:glycogen biosynthetic process"/>
    <property type="evidence" value="ECO:0000316"/>
    <property type="project" value="SGD"/>
</dbReference>
<dbReference type="CDD" id="cd02537">
    <property type="entry name" value="GT8_Glycogenin"/>
    <property type="match status" value="1"/>
</dbReference>
<dbReference type="FunFam" id="3.90.550.10:FF:000148">
    <property type="entry name" value="Glg2p"/>
    <property type="match status" value="1"/>
</dbReference>
<dbReference type="Gene3D" id="3.90.550.10">
    <property type="entry name" value="Spore Coat Polysaccharide Biosynthesis Protein SpsA, Chain A"/>
    <property type="match status" value="1"/>
</dbReference>
<dbReference type="InterPro" id="IPR002495">
    <property type="entry name" value="Glyco_trans_8"/>
</dbReference>
<dbReference type="InterPro" id="IPR050587">
    <property type="entry name" value="GNT1/Glycosyltrans_8"/>
</dbReference>
<dbReference type="InterPro" id="IPR029044">
    <property type="entry name" value="Nucleotide-diphossugar_trans"/>
</dbReference>
<dbReference type="PANTHER" id="PTHR11183">
    <property type="entry name" value="GLYCOGENIN SUBFAMILY MEMBER"/>
    <property type="match status" value="1"/>
</dbReference>
<dbReference type="Pfam" id="PF01501">
    <property type="entry name" value="Glyco_transf_8"/>
    <property type="match status" value="1"/>
</dbReference>
<dbReference type="SUPFAM" id="SSF53448">
    <property type="entry name" value="Nucleotide-diphospho-sugar transferases"/>
    <property type="match status" value="1"/>
</dbReference>
<comment type="function">
    <text evidence="7 9 10">Self-glucosylating initiator of glycogen synthesis. It catalyzes the formation of a short alpha (1,4)-glucosyl chain covalently attached via a glucose 1-O-tyrosyl linkage to internal tyrosine residues and these chains act as primers for the elongation reaction catalyzed by glycogen synthase (PubMed:15479227, PubMed:8524228, PubMed:8900126). Capable of transferring glucosyl residues to unbound acceptors such as free oligoglucans or oligoglucan derivatives (PubMed:8900126).</text>
</comment>
<comment type="catalytic activity">
    <reaction evidence="13">
        <text>L-tyrosyl-[glycogenin] + UDP-alpha-D-glucose = alpha-D-glucosyl-L-tyrosyl-[glycogenin] + UDP + H(+)</text>
        <dbReference type="Rhea" id="RHEA:23360"/>
        <dbReference type="Rhea" id="RHEA-COMP:14604"/>
        <dbReference type="Rhea" id="RHEA-COMP:14605"/>
        <dbReference type="ChEBI" id="CHEBI:15378"/>
        <dbReference type="ChEBI" id="CHEBI:46858"/>
        <dbReference type="ChEBI" id="CHEBI:58223"/>
        <dbReference type="ChEBI" id="CHEBI:58885"/>
        <dbReference type="ChEBI" id="CHEBI:140573"/>
        <dbReference type="EC" id="2.4.1.186"/>
    </reaction>
</comment>
<comment type="catalytic activity">
    <reaction evidence="13">
        <text>[1,4-alpha-D-glucosyl](n)-L-tyrosyl-[glycogenin] + UDP-alpha-D-glucose = [1,4-alpha-D-glucosyl](n+1)-L-tyrosyl-[glycogenin] + UDP + H(+)</text>
        <dbReference type="Rhea" id="RHEA:56560"/>
        <dbReference type="Rhea" id="RHEA-COMP:14606"/>
        <dbReference type="Rhea" id="RHEA-COMP:14607"/>
        <dbReference type="ChEBI" id="CHEBI:15378"/>
        <dbReference type="ChEBI" id="CHEBI:58223"/>
        <dbReference type="ChEBI" id="CHEBI:58885"/>
        <dbReference type="ChEBI" id="CHEBI:140574"/>
        <dbReference type="EC" id="2.4.1.186"/>
    </reaction>
</comment>
<comment type="cofactor">
    <cofactor evidence="3">
        <name>Mn(2+)</name>
        <dbReference type="ChEBI" id="CHEBI:29035"/>
    </cofactor>
</comment>
<comment type="subunit">
    <text evidence="9">Interacts with glycogen synthase GSY2.</text>
</comment>
<comment type="subcellular location">
    <subcellularLocation>
        <location evidence="1">Cytoplasm</location>
    </subcellularLocation>
    <subcellularLocation>
        <location evidence="1">Vacuole</location>
    </subcellularLocation>
    <text evidence="1">Localizes to glycogen granules (glycosomes) in the cytoplasm. Localizes to the vacuole during nitrogen starvation-induced glycophagy (autophagy of glycosomes).</text>
</comment>
<comment type="disruption phenotype">
    <text evidence="8">Simultaneous knockout of GLG1 abolishes glycogen biosynthesis.</text>
</comment>
<comment type="miscellaneous">
    <text evidence="6">Present with 981 molecules/cell in log phase SD medium.</text>
</comment>
<comment type="similarity">
    <text evidence="12">Belongs to the glycosyltransferase 8 family. Glycogenin subfamily.</text>
</comment>
<protein>
    <recommendedName>
        <fullName evidence="11">Glycogenin-2</fullName>
        <ecNumber evidence="13">2.4.1.186</ecNumber>
    </recommendedName>
    <alternativeName>
        <fullName evidence="11">Glycogen synthesis initiator protein 2</fullName>
    </alternativeName>
    <alternativeName>
        <fullName evidence="11">Glycogenin glucosyltransferase 2</fullName>
    </alternativeName>
</protein>
<reference key="1">
    <citation type="journal article" date="1995" name="Mol. Cell. Biol.">
        <title>Requirement of the self-glucosylating initiator proteins Glg1p and Glg2p for glycogen accumulation in Saccharomyces cerevisiae.</title>
        <authorList>
            <person name="Cheng C."/>
            <person name="Mu J."/>
            <person name="Farkas I."/>
            <person name="Huang D."/>
            <person name="Goebl M.G."/>
            <person name="Roach P.J."/>
        </authorList>
    </citation>
    <scope>NUCLEOTIDE SEQUENCE [GENOMIC DNA]</scope>
    <scope>FUNCTION</scope>
    <scope>INTERACTION WITH GSY2</scope>
</reference>
<reference key="2">
    <citation type="journal article" date="1996" name="Yeast">
        <title>Sequence analysis of a 40.7 kb segment from the left arm of yeast chromosome X reveals 14 known genes and 13 new open reading frames including homologues of genes clustered on the right arm of chromosome XI.</title>
        <authorList>
            <person name="Katsoulou C."/>
            <person name="Tzermia M."/>
            <person name="Tavernarakis N."/>
            <person name="Alexandraki D."/>
        </authorList>
    </citation>
    <scope>NUCLEOTIDE SEQUENCE [GENOMIC DNA]</scope>
    <source>
        <strain>ATCC 96604 / S288c / FY1679</strain>
    </source>
</reference>
<reference key="3">
    <citation type="journal article" date="1996" name="EMBO J.">
        <title>Complete nucleotide sequence of Saccharomyces cerevisiae chromosome X.</title>
        <authorList>
            <person name="Galibert F."/>
            <person name="Alexandraki D."/>
            <person name="Baur A."/>
            <person name="Boles E."/>
            <person name="Chalwatzis N."/>
            <person name="Chuat J.-C."/>
            <person name="Coster F."/>
            <person name="Cziepluch C."/>
            <person name="de Haan M."/>
            <person name="Domdey H."/>
            <person name="Durand P."/>
            <person name="Entian K.-D."/>
            <person name="Gatius M."/>
            <person name="Goffeau A."/>
            <person name="Grivell L.A."/>
            <person name="Hennemann A."/>
            <person name="Herbert C.J."/>
            <person name="Heumann K."/>
            <person name="Hilger F."/>
            <person name="Hollenberg C.P."/>
            <person name="Huang M.-E."/>
            <person name="Jacq C."/>
            <person name="Jauniaux J.-C."/>
            <person name="Katsoulou C."/>
            <person name="Kirchrath L."/>
            <person name="Kleine K."/>
            <person name="Kordes E."/>
            <person name="Koetter P."/>
            <person name="Liebl S."/>
            <person name="Louis E.J."/>
            <person name="Manus V."/>
            <person name="Mewes H.-W."/>
            <person name="Miosga T."/>
            <person name="Obermaier B."/>
            <person name="Perea J."/>
            <person name="Pohl T.M."/>
            <person name="Portetelle D."/>
            <person name="Pujol A."/>
            <person name="Purnelle B."/>
            <person name="Ramezani Rad M."/>
            <person name="Rasmussen S.W."/>
            <person name="Rose M."/>
            <person name="Rossau R."/>
            <person name="Schaaff-Gerstenschlaeger I."/>
            <person name="Smits P.H.M."/>
            <person name="Scarcez T."/>
            <person name="Soriano N."/>
            <person name="To Van D."/>
            <person name="Tzermia M."/>
            <person name="Van Broekhoven A."/>
            <person name="Vandenbol M."/>
            <person name="Wedler H."/>
            <person name="von Wettstein D."/>
            <person name="Wambutt R."/>
            <person name="Zagulski M."/>
            <person name="Zollner A."/>
            <person name="Karpfinger-Hartl L."/>
        </authorList>
    </citation>
    <scope>NUCLEOTIDE SEQUENCE [LARGE SCALE GENOMIC DNA]</scope>
    <source>
        <strain>ATCC 204508 / S288c</strain>
    </source>
</reference>
<reference key="4">
    <citation type="journal article" date="2014" name="G3 (Bethesda)">
        <title>The reference genome sequence of Saccharomyces cerevisiae: Then and now.</title>
        <authorList>
            <person name="Engel S.R."/>
            <person name="Dietrich F.S."/>
            <person name="Fisk D.G."/>
            <person name="Binkley G."/>
            <person name="Balakrishnan R."/>
            <person name="Costanzo M.C."/>
            <person name="Dwight S.S."/>
            <person name="Hitz B.C."/>
            <person name="Karra K."/>
            <person name="Nash R.S."/>
            <person name="Weng S."/>
            <person name="Wong E.D."/>
            <person name="Lloyd P."/>
            <person name="Skrzypek M.S."/>
            <person name="Miyasato S.R."/>
            <person name="Simison M."/>
            <person name="Cherry J.M."/>
        </authorList>
    </citation>
    <scope>GENOME REANNOTATION</scope>
    <source>
        <strain>ATCC 204508 / S288c</strain>
    </source>
</reference>
<reference key="5">
    <citation type="journal article" date="1996" name="J. Biol. Chem.">
        <title>Initiation of glycogen synthesis in yeast. Requirement of multiple tyrosine residues for function of the self-glucosylating Glg proteins in vivo.</title>
        <authorList>
            <person name="Mu J."/>
            <person name="Cheng C."/>
            <person name="Roach P.J."/>
        </authorList>
    </citation>
    <scope>PROTEIN SEQUENCE OF 228-234 AND 239-244</scope>
    <scope>FUNCTION</scope>
    <scope>MUTAGENESIS OF TYR-230; TYR-232 AND TYR-367</scope>
</reference>
<reference key="6">
    <citation type="journal article" date="2003" name="Nature">
        <title>Global analysis of protein localization in budding yeast.</title>
        <authorList>
            <person name="Huh W.-K."/>
            <person name="Falvo J.V."/>
            <person name="Gerke L.C."/>
            <person name="Carroll A.S."/>
            <person name="Howson R.W."/>
            <person name="Weissman J.S."/>
            <person name="O'Shea E.K."/>
        </authorList>
    </citation>
    <scope>SUBCELLULAR LOCATION [LARGE SCALE ANALYSIS]</scope>
</reference>
<reference key="7">
    <citation type="journal article" date="2003" name="Nature">
        <title>Global analysis of protein expression in yeast.</title>
        <authorList>
            <person name="Ghaemmaghami S."/>
            <person name="Huh W.-K."/>
            <person name="Bower K."/>
            <person name="Howson R.W."/>
            <person name="Belle A."/>
            <person name="Dephoure N."/>
            <person name="O'Shea E.K."/>
            <person name="Weissman J.S."/>
        </authorList>
    </citation>
    <scope>LEVEL OF PROTEIN EXPRESSION [LARGE SCALE ANALYSIS]</scope>
</reference>
<reference key="8">
    <citation type="journal article" date="2004" name="Eur. J. Biochem.">
        <title>Yeast glycogenin (Glg2p) produced in Escherichia coli is simultaneously glucosylated at two vicinal tyrosine residues but results in a reduced bacterial glycogen accumulation.</title>
        <authorList>
            <person name="Albrecht T."/>
            <person name="Haebel S."/>
            <person name="Koch A."/>
            <person name="Krause U."/>
            <person name="Eckermann N."/>
            <person name="Steup M."/>
        </authorList>
    </citation>
    <scope>FUNCTION</scope>
    <scope>GLYCOSYLATION AT TYR-230 AND TYR-232</scope>
</reference>
<reference key="9">
    <citation type="journal article" date="2024" name="IScience">
        <title>Atg45 is an autophagy receptor for glycogen, a non-preferred cargo of bulk autophagy in yeast.</title>
        <authorList>
            <person name="Isoda T."/>
            <person name="Takeda E."/>
            <person name="Hosokawa S."/>
            <person name="Hotta-Ren S."/>
            <person name="Ohsumi Y."/>
        </authorList>
    </citation>
    <scope>DISRUPTION PHENOTYPE</scope>
</reference>
<feature type="chain" id="PRO_0000215182" description="Glycogenin-2">
    <location>
        <begin position="1"/>
        <end position="380"/>
    </location>
</feature>
<feature type="region of interest" description="Disordered" evidence="5">
    <location>
        <begin position="331"/>
        <end position="355"/>
    </location>
</feature>
<feature type="compositionally biased region" description="Basic and acidic residues" evidence="5">
    <location>
        <begin position="341"/>
        <end position="351"/>
    </location>
</feature>
<feature type="binding site" evidence="3">
    <location>
        <position position="10"/>
    </location>
    <ligand>
        <name>UDP</name>
        <dbReference type="ChEBI" id="CHEBI:58223"/>
    </ligand>
</feature>
<feature type="binding site" evidence="3">
    <location>
        <position position="10"/>
    </location>
    <ligand>
        <name>UDP-alpha-D-glucose</name>
        <dbReference type="ChEBI" id="CHEBI:58885"/>
    </ligand>
</feature>
<feature type="binding site" evidence="3">
    <location>
        <position position="16"/>
    </location>
    <ligand>
        <name>UDP</name>
        <dbReference type="ChEBI" id="CHEBI:58223"/>
    </ligand>
</feature>
<feature type="binding site" evidence="3">
    <location>
        <position position="16"/>
    </location>
    <ligand>
        <name>UDP-alpha-D-glucose</name>
        <dbReference type="ChEBI" id="CHEBI:58885"/>
    </ligand>
</feature>
<feature type="binding site" evidence="3">
    <location>
        <position position="95"/>
    </location>
    <ligand>
        <name>UDP</name>
        <dbReference type="ChEBI" id="CHEBI:58223"/>
    </ligand>
</feature>
<feature type="binding site" evidence="3">
    <location>
        <position position="95"/>
    </location>
    <ligand>
        <name>UDP-alpha-D-glucose</name>
        <dbReference type="ChEBI" id="CHEBI:58885"/>
    </ligand>
</feature>
<feature type="binding site" evidence="3">
    <location>
        <position position="104"/>
    </location>
    <ligand>
        <name>UDP-alpha-D-glucose</name>
        <dbReference type="ChEBI" id="CHEBI:58885"/>
    </ligand>
</feature>
<feature type="binding site" evidence="3">
    <location>
        <position position="120"/>
    </location>
    <ligand>
        <name>Mn(2+)</name>
        <dbReference type="ChEBI" id="CHEBI:29035"/>
    </ligand>
</feature>
<feature type="binding site" evidence="2">
    <location>
        <position position="120"/>
    </location>
    <ligand>
        <name>UDP</name>
        <dbReference type="ChEBI" id="CHEBI:58223"/>
    </ligand>
</feature>
<feature type="binding site" evidence="3">
    <location>
        <position position="120"/>
    </location>
    <ligand>
        <name>UDP-alpha-D-glucose</name>
        <dbReference type="ChEBI" id="CHEBI:58885"/>
    </ligand>
</feature>
<feature type="binding site" evidence="3">
    <location>
        <position position="121"/>
    </location>
    <ligand>
        <name>UDP</name>
        <dbReference type="ChEBI" id="CHEBI:58223"/>
    </ligand>
</feature>
<feature type="binding site" evidence="3">
    <location>
        <position position="121"/>
    </location>
    <ligand>
        <name>UDP-alpha-D-glucose</name>
        <dbReference type="ChEBI" id="CHEBI:58885"/>
    </ligand>
</feature>
<feature type="binding site" evidence="3">
    <location>
        <position position="122"/>
    </location>
    <ligand>
        <name>Mn(2+)</name>
        <dbReference type="ChEBI" id="CHEBI:29035"/>
    </ligand>
</feature>
<feature type="binding site" evidence="3">
    <location>
        <position position="122"/>
    </location>
    <ligand>
        <name>UDP</name>
        <dbReference type="ChEBI" id="CHEBI:58223"/>
    </ligand>
</feature>
<feature type="binding site" evidence="3">
    <location>
        <position position="122"/>
    </location>
    <ligand>
        <name>UDP-alpha-D-glucose</name>
        <dbReference type="ChEBI" id="CHEBI:58885"/>
    </ligand>
</feature>
<feature type="binding site" evidence="3">
    <location>
        <position position="158"/>
    </location>
    <ligand>
        <name>UDP-alpha-D-glucose</name>
        <dbReference type="ChEBI" id="CHEBI:58885"/>
    </ligand>
</feature>
<feature type="binding site" evidence="3">
    <location>
        <position position="159"/>
    </location>
    <ligand>
        <name>UDP-alpha-D-glucose</name>
        <dbReference type="ChEBI" id="CHEBI:58885"/>
    </ligand>
</feature>
<feature type="binding site" evidence="3">
    <location>
        <position position="185"/>
    </location>
    <ligand>
        <name>UDP-alpha-D-glucose</name>
        <dbReference type="ChEBI" id="CHEBI:58885"/>
    </ligand>
</feature>
<feature type="binding site" evidence="3">
    <location>
        <position position="188"/>
    </location>
    <ligand>
        <name>UDP-alpha-D-glucose</name>
        <dbReference type="ChEBI" id="CHEBI:58885"/>
    </ligand>
</feature>
<feature type="binding site" evidence="3">
    <location>
        <position position="189"/>
    </location>
    <ligand>
        <name>UDP-alpha-D-glucose</name>
        <dbReference type="ChEBI" id="CHEBI:58885"/>
    </ligand>
</feature>
<feature type="binding site" evidence="3">
    <location>
        <position position="249"/>
    </location>
    <ligand>
        <name>Mn(2+)</name>
        <dbReference type="ChEBI" id="CHEBI:29035"/>
    </ligand>
</feature>
<feature type="binding site" evidence="2">
    <location>
        <position position="249"/>
    </location>
    <ligand>
        <name>UDP</name>
        <dbReference type="ChEBI" id="CHEBI:58223"/>
    </ligand>
</feature>
<feature type="binding site" evidence="3">
    <location>
        <position position="252"/>
    </location>
    <ligand>
        <name>UDP</name>
        <dbReference type="ChEBI" id="CHEBI:58223"/>
    </ligand>
</feature>
<feature type="binding site" evidence="3">
    <location>
        <position position="252"/>
    </location>
    <ligand>
        <name>UDP-alpha-D-glucose</name>
        <dbReference type="ChEBI" id="CHEBI:58885"/>
    </ligand>
</feature>
<feature type="binding site" evidence="3">
    <location>
        <position position="255"/>
    </location>
    <ligand>
        <name>UDP</name>
        <dbReference type="ChEBI" id="CHEBI:58223"/>
    </ligand>
</feature>
<feature type="binding site" evidence="3">
    <location>
        <position position="255"/>
    </location>
    <ligand>
        <name>UDP-alpha-D-glucose</name>
        <dbReference type="ChEBI" id="CHEBI:58885"/>
    </ligand>
</feature>
<feature type="site" description="Important for catalytic activity" evidence="2">
    <location>
        <position position="104"/>
    </location>
</feature>
<feature type="glycosylation site" description="O-linked (Glc...) tyrosine" evidence="7">
    <location>
        <position position="230"/>
    </location>
</feature>
<feature type="glycosylation site" description="O-linked (Glc...) tyrosine" evidence="7">
    <location>
        <position position="232"/>
    </location>
</feature>
<feature type="glycosylation site" description="O-linked (Glc...) tyrosine" evidence="4">
    <location>
        <position position="367"/>
    </location>
</feature>
<feature type="mutagenesis site" description="Eliminates glycogen accumulation; when associated with F-232 and F-367." evidence="10">
    <original>Y</original>
    <variation>F</variation>
    <location>
        <position position="230"/>
    </location>
</feature>
<feature type="mutagenesis site" description="Eliminates glycogen accumulation; when associated with F-230 and F-367." evidence="10">
    <original>Y</original>
    <variation>F</variation>
    <location>
        <position position="232"/>
    </location>
</feature>
<feature type="mutagenesis site" description="Eliminates glycogen accumulation; when associated with F-230 and F-232." evidence="10">
    <original>Y</original>
    <variation>F</variation>
    <location>
        <position position="367"/>
    </location>
</feature>
<feature type="sequence conflict" description="In Ref. 5; AA sequence." evidence="12" ref="5">
    <location>
        <position position="241"/>
    </location>
</feature>
<name>GLG2_YEAST</name>
<sequence length="380" mass="44546">MAKKVAICTLLYSRDYLPGALTLAYQLQKLLKHAVVEDEITLCLLIEKKLFGDEFKPQEIALIRSLFKEIIIIEPLKDQEKSIEKNKANLELLKRPELSHTLLKARLWELVQFDQVLFLDADTLPLNKEFFEILRLYPEQTRFQIAAVPDIGWPDMFNTGVLLLIPDLDMATSLQDFLIKTVSIDGADQGIFNQFFNPICNYSKEVLHKVSPLMEWIRLPFTYNVTMPNYGYQSSPAMNFFQQHIRLIHFIGTFKPWSRNTTDYDDHYYQLWRSTQRELYSECHLSNYFTHLQLGNIETETNFYHEPPCLQDLLNHGKRENQKHVDLDITSVDRNASQKSTAEKHDIEKPTSKPQSAFKFDWESTDYLDRVQRAFPKPDT</sequence>
<evidence type="ECO:0000250" key="1">
    <source>
        <dbReference type="UniProtKB" id="C4R941"/>
    </source>
</evidence>
<evidence type="ECO:0000250" key="2">
    <source>
        <dbReference type="UniProtKB" id="P13280"/>
    </source>
</evidence>
<evidence type="ECO:0000250" key="3">
    <source>
        <dbReference type="UniProtKB" id="P46976"/>
    </source>
</evidence>
<evidence type="ECO:0000255" key="4"/>
<evidence type="ECO:0000256" key="5">
    <source>
        <dbReference type="SAM" id="MobiDB-lite"/>
    </source>
</evidence>
<evidence type="ECO:0000269" key="6">
    <source>
    </source>
</evidence>
<evidence type="ECO:0000269" key="7">
    <source>
    </source>
</evidence>
<evidence type="ECO:0000269" key="8">
    <source>
    </source>
</evidence>
<evidence type="ECO:0000269" key="9">
    <source>
    </source>
</evidence>
<evidence type="ECO:0000269" key="10">
    <source>
    </source>
</evidence>
<evidence type="ECO:0000303" key="11">
    <source>
    </source>
</evidence>
<evidence type="ECO:0000305" key="12"/>
<evidence type="ECO:0000305" key="13">
    <source>
    </source>
</evidence>
<proteinExistence type="evidence at protein level"/>
<keyword id="KW-0963">Cytoplasm</keyword>
<keyword id="KW-0903">Direct protein sequencing</keyword>
<keyword id="KW-0320">Glycogen biosynthesis</keyword>
<keyword id="KW-0325">Glycoprotein</keyword>
<keyword id="KW-0464">Manganese</keyword>
<keyword id="KW-0479">Metal-binding</keyword>
<keyword id="KW-1185">Reference proteome</keyword>
<keyword id="KW-0808">Transferase</keyword>
<keyword id="KW-0926">Vacuole</keyword>